<proteinExistence type="inferred from homology"/>
<name>HSCB_ACIB3</name>
<organism>
    <name type="scientific">Acinetobacter baumannii (strain AB307-0294)</name>
    <dbReference type="NCBI Taxonomy" id="557600"/>
    <lineage>
        <taxon>Bacteria</taxon>
        <taxon>Pseudomonadati</taxon>
        <taxon>Pseudomonadota</taxon>
        <taxon>Gammaproteobacteria</taxon>
        <taxon>Moraxellales</taxon>
        <taxon>Moraxellaceae</taxon>
        <taxon>Acinetobacter</taxon>
        <taxon>Acinetobacter calcoaceticus/baumannii complex</taxon>
    </lineage>
</organism>
<reference key="1">
    <citation type="journal article" date="2008" name="J. Bacteriol.">
        <title>Comparative genome sequence analysis of multidrug-resistant Acinetobacter baumannii.</title>
        <authorList>
            <person name="Adams M.D."/>
            <person name="Goglin K."/>
            <person name="Molyneaux N."/>
            <person name="Hujer K.M."/>
            <person name="Lavender H."/>
            <person name="Jamison J.J."/>
            <person name="MacDonald I.J."/>
            <person name="Martin K.M."/>
            <person name="Russo T."/>
            <person name="Campagnari A.A."/>
            <person name="Hujer A.M."/>
            <person name="Bonomo R.A."/>
            <person name="Gill S.R."/>
        </authorList>
    </citation>
    <scope>NUCLEOTIDE SEQUENCE [LARGE SCALE GENOMIC DNA]</scope>
    <source>
        <strain>AB307-0294</strain>
    </source>
</reference>
<protein>
    <recommendedName>
        <fullName evidence="1">Co-chaperone protein HscB homolog</fullName>
    </recommendedName>
</protein>
<gene>
    <name evidence="1" type="primary">hscB</name>
    <name type="ordered locus">ABBFA_001868</name>
</gene>
<accession>B7H3H3</accession>
<evidence type="ECO:0000255" key="1">
    <source>
        <dbReference type="HAMAP-Rule" id="MF_00682"/>
    </source>
</evidence>
<sequence length="172" mass="20136">MNHFELFNLPVALDIDLASLKSNFLSLQQQYHPDKAADKDQALIKSSEINQAFKTLSQVDSRAAYLLALKKQDHHLDQSISDFEFLQSALELREQLDEATSSEHLRTLRLEVQQWIDGLVREFKIDYSEEDWAEARDTVRKLRFFQRVLNDIDKAEDQLLDDEDSFDLDDDF</sequence>
<keyword id="KW-0143">Chaperone</keyword>
<comment type="function">
    <text evidence="1">Co-chaperone involved in the maturation of iron-sulfur cluster-containing proteins. Seems to help targeting proteins to be folded toward HscA.</text>
</comment>
<comment type="subunit">
    <text evidence="1">Interacts with HscA and stimulates its ATPase activity.</text>
</comment>
<comment type="similarity">
    <text evidence="1">Belongs to the HscB family.</text>
</comment>
<feature type="chain" id="PRO_1000131718" description="Co-chaperone protein HscB homolog">
    <location>
        <begin position="1"/>
        <end position="172"/>
    </location>
</feature>
<feature type="domain" description="J" evidence="1">
    <location>
        <begin position="2"/>
        <end position="69"/>
    </location>
</feature>
<dbReference type="EMBL" id="CP001172">
    <property type="protein sequence ID" value="ACJ59008.1"/>
    <property type="molecule type" value="Genomic_DNA"/>
</dbReference>
<dbReference type="RefSeq" id="WP_001015254.1">
    <property type="nucleotide sequence ID" value="NZ_CP001172.1"/>
</dbReference>
<dbReference type="SMR" id="B7H3H3"/>
<dbReference type="GeneID" id="92893838"/>
<dbReference type="HOGENOM" id="CLU_068529_2_0_6"/>
<dbReference type="Proteomes" id="UP000006924">
    <property type="component" value="Chromosome"/>
</dbReference>
<dbReference type="GO" id="GO:0001671">
    <property type="term" value="F:ATPase activator activity"/>
    <property type="evidence" value="ECO:0007669"/>
    <property type="project" value="InterPro"/>
</dbReference>
<dbReference type="GO" id="GO:0051087">
    <property type="term" value="F:protein-folding chaperone binding"/>
    <property type="evidence" value="ECO:0007669"/>
    <property type="project" value="InterPro"/>
</dbReference>
<dbReference type="GO" id="GO:0044571">
    <property type="term" value="P:[2Fe-2S] cluster assembly"/>
    <property type="evidence" value="ECO:0007669"/>
    <property type="project" value="InterPro"/>
</dbReference>
<dbReference type="GO" id="GO:0051259">
    <property type="term" value="P:protein complex oligomerization"/>
    <property type="evidence" value="ECO:0007669"/>
    <property type="project" value="InterPro"/>
</dbReference>
<dbReference type="GO" id="GO:0006457">
    <property type="term" value="P:protein folding"/>
    <property type="evidence" value="ECO:0007669"/>
    <property type="project" value="UniProtKB-UniRule"/>
</dbReference>
<dbReference type="CDD" id="cd06257">
    <property type="entry name" value="DnaJ"/>
    <property type="match status" value="1"/>
</dbReference>
<dbReference type="Gene3D" id="1.10.287.110">
    <property type="entry name" value="DnaJ domain"/>
    <property type="match status" value="1"/>
</dbReference>
<dbReference type="Gene3D" id="1.20.1280.20">
    <property type="entry name" value="HscB, C-terminal domain"/>
    <property type="match status" value="1"/>
</dbReference>
<dbReference type="HAMAP" id="MF_00682">
    <property type="entry name" value="HscB"/>
    <property type="match status" value="1"/>
</dbReference>
<dbReference type="InterPro" id="IPR001623">
    <property type="entry name" value="DnaJ_domain"/>
</dbReference>
<dbReference type="InterPro" id="IPR004640">
    <property type="entry name" value="HscB"/>
</dbReference>
<dbReference type="InterPro" id="IPR036386">
    <property type="entry name" value="HscB_C_sf"/>
</dbReference>
<dbReference type="InterPro" id="IPR009073">
    <property type="entry name" value="HscB_oligo_C"/>
</dbReference>
<dbReference type="InterPro" id="IPR036869">
    <property type="entry name" value="J_dom_sf"/>
</dbReference>
<dbReference type="NCBIfam" id="TIGR00714">
    <property type="entry name" value="hscB"/>
    <property type="match status" value="1"/>
</dbReference>
<dbReference type="PANTHER" id="PTHR14021">
    <property type="entry name" value="IRON-SULFUR CLUSTER CO-CHAPERONE PROTEIN HSCB"/>
    <property type="match status" value="1"/>
</dbReference>
<dbReference type="PANTHER" id="PTHR14021:SF15">
    <property type="entry name" value="IRON-SULFUR CLUSTER CO-CHAPERONE PROTEIN HSCB"/>
    <property type="match status" value="1"/>
</dbReference>
<dbReference type="Pfam" id="PF00226">
    <property type="entry name" value="DnaJ"/>
    <property type="match status" value="1"/>
</dbReference>
<dbReference type="Pfam" id="PF07743">
    <property type="entry name" value="HSCB_C"/>
    <property type="match status" value="1"/>
</dbReference>
<dbReference type="SMART" id="SM00271">
    <property type="entry name" value="DnaJ"/>
    <property type="match status" value="1"/>
</dbReference>
<dbReference type="SUPFAM" id="SSF46565">
    <property type="entry name" value="Chaperone J-domain"/>
    <property type="match status" value="1"/>
</dbReference>
<dbReference type="SUPFAM" id="SSF47144">
    <property type="entry name" value="HSC20 (HSCB), C-terminal oligomerisation domain"/>
    <property type="match status" value="1"/>
</dbReference>
<dbReference type="PROSITE" id="PS50076">
    <property type="entry name" value="DNAJ_2"/>
    <property type="match status" value="1"/>
</dbReference>